<keyword id="KW-0012">Acyltransferase</keyword>
<keyword id="KW-0963">Cytoplasm</keyword>
<keyword id="KW-0408">Iron</keyword>
<keyword id="KW-0479">Metal-binding</keyword>
<keyword id="KW-0808">Transferase</keyword>
<keyword id="KW-0819">tRNA processing</keyword>
<proteinExistence type="inferred from homology"/>
<name>TSAD_VARPS</name>
<protein>
    <recommendedName>
        <fullName evidence="1">tRNA N6-adenosine threonylcarbamoyltransferase</fullName>
        <ecNumber evidence="1">2.3.1.234</ecNumber>
    </recommendedName>
    <alternativeName>
        <fullName evidence="1">N6-L-threonylcarbamoyladenine synthase</fullName>
        <shortName evidence="1">t(6)A synthase</shortName>
    </alternativeName>
    <alternativeName>
        <fullName evidence="1">t(6)A37 threonylcarbamoyladenosine biosynthesis protein TsaD</fullName>
    </alternativeName>
    <alternativeName>
        <fullName evidence="1">tRNA threonylcarbamoyladenosine biosynthesis protein TsaD</fullName>
    </alternativeName>
</protein>
<comment type="function">
    <text evidence="1">Required for the formation of a threonylcarbamoyl group on adenosine at position 37 (t(6)A37) in tRNAs that read codons beginning with adenine. Is involved in the transfer of the threonylcarbamoyl moiety of threonylcarbamoyl-AMP (TC-AMP) to the N6 group of A37, together with TsaE and TsaB. TsaD likely plays a direct catalytic role in this reaction.</text>
</comment>
<comment type="catalytic activity">
    <reaction evidence="1">
        <text>L-threonylcarbamoyladenylate + adenosine(37) in tRNA = N(6)-L-threonylcarbamoyladenosine(37) in tRNA + AMP + H(+)</text>
        <dbReference type="Rhea" id="RHEA:37059"/>
        <dbReference type="Rhea" id="RHEA-COMP:10162"/>
        <dbReference type="Rhea" id="RHEA-COMP:10163"/>
        <dbReference type="ChEBI" id="CHEBI:15378"/>
        <dbReference type="ChEBI" id="CHEBI:73682"/>
        <dbReference type="ChEBI" id="CHEBI:74411"/>
        <dbReference type="ChEBI" id="CHEBI:74418"/>
        <dbReference type="ChEBI" id="CHEBI:456215"/>
        <dbReference type="EC" id="2.3.1.234"/>
    </reaction>
</comment>
<comment type="cofactor">
    <cofactor evidence="1">
        <name>Fe(2+)</name>
        <dbReference type="ChEBI" id="CHEBI:29033"/>
    </cofactor>
    <text evidence="1">Binds 1 Fe(2+) ion per subunit.</text>
</comment>
<comment type="subcellular location">
    <subcellularLocation>
        <location evidence="1">Cytoplasm</location>
    </subcellularLocation>
</comment>
<comment type="similarity">
    <text evidence="1">Belongs to the KAE1 / TsaD family.</text>
</comment>
<reference key="1">
    <citation type="journal article" date="2011" name="J. Bacteriol.">
        <title>Complete genome sequence of the metabolically versatile plant growth-promoting endophyte, Variovorax paradoxus S110.</title>
        <authorList>
            <person name="Han J.I."/>
            <person name="Choi H.K."/>
            <person name="Lee S.W."/>
            <person name="Orwin P.M."/>
            <person name="Kim J."/>
            <person name="Laroe S.L."/>
            <person name="Kim T.G."/>
            <person name="O'Neil J."/>
            <person name="Leadbetter J.R."/>
            <person name="Lee S.Y."/>
            <person name="Hur C.G."/>
            <person name="Spain J.C."/>
            <person name="Ovchinnikova G."/>
            <person name="Goodwin L."/>
            <person name="Han C."/>
        </authorList>
    </citation>
    <scope>NUCLEOTIDE SEQUENCE [LARGE SCALE GENOMIC DNA]</scope>
    <source>
        <strain>S110</strain>
    </source>
</reference>
<dbReference type="EC" id="2.3.1.234" evidence="1"/>
<dbReference type="EMBL" id="CP001635">
    <property type="protein sequence ID" value="ACS20137.1"/>
    <property type="molecule type" value="Genomic_DNA"/>
</dbReference>
<dbReference type="SMR" id="C5CT30"/>
<dbReference type="STRING" id="543728.Vapar_3520"/>
<dbReference type="KEGG" id="vap:Vapar_3520"/>
<dbReference type="eggNOG" id="COG0533">
    <property type="taxonomic scope" value="Bacteria"/>
</dbReference>
<dbReference type="HOGENOM" id="CLU_023208_0_2_4"/>
<dbReference type="OrthoDB" id="9806197at2"/>
<dbReference type="GO" id="GO:0005737">
    <property type="term" value="C:cytoplasm"/>
    <property type="evidence" value="ECO:0007669"/>
    <property type="project" value="UniProtKB-SubCell"/>
</dbReference>
<dbReference type="GO" id="GO:0005506">
    <property type="term" value="F:iron ion binding"/>
    <property type="evidence" value="ECO:0007669"/>
    <property type="project" value="UniProtKB-UniRule"/>
</dbReference>
<dbReference type="GO" id="GO:0061711">
    <property type="term" value="F:N(6)-L-threonylcarbamoyladenine synthase activity"/>
    <property type="evidence" value="ECO:0007669"/>
    <property type="project" value="UniProtKB-EC"/>
</dbReference>
<dbReference type="GO" id="GO:0002949">
    <property type="term" value="P:tRNA threonylcarbamoyladenosine modification"/>
    <property type="evidence" value="ECO:0007669"/>
    <property type="project" value="UniProtKB-UniRule"/>
</dbReference>
<dbReference type="CDD" id="cd24133">
    <property type="entry name" value="ASKHA_NBD_TsaD_bac"/>
    <property type="match status" value="1"/>
</dbReference>
<dbReference type="FunFam" id="3.30.420.40:FF:000012">
    <property type="entry name" value="tRNA N6-adenosine threonylcarbamoyltransferase"/>
    <property type="match status" value="1"/>
</dbReference>
<dbReference type="FunFam" id="3.30.420.40:FF:000040">
    <property type="entry name" value="tRNA N6-adenosine threonylcarbamoyltransferase"/>
    <property type="match status" value="1"/>
</dbReference>
<dbReference type="Gene3D" id="3.30.420.40">
    <property type="match status" value="2"/>
</dbReference>
<dbReference type="HAMAP" id="MF_01445">
    <property type="entry name" value="TsaD"/>
    <property type="match status" value="1"/>
</dbReference>
<dbReference type="InterPro" id="IPR043129">
    <property type="entry name" value="ATPase_NBD"/>
</dbReference>
<dbReference type="InterPro" id="IPR000905">
    <property type="entry name" value="Gcp-like_dom"/>
</dbReference>
<dbReference type="InterPro" id="IPR017861">
    <property type="entry name" value="KAE1/TsaD"/>
</dbReference>
<dbReference type="InterPro" id="IPR017860">
    <property type="entry name" value="Peptidase_M22_CS"/>
</dbReference>
<dbReference type="InterPro" id="IPR022450">
    <property type="entry name" value="TsaD"/>
</dbReference>
<dbReference type="NCBIfam" id="TIGR00329">
    <property type="entry name" value="gcp_kae1"/>
    <property type="match status" value="1"/>
</dbReference>
<dbReference type="NCBIfam" id="TIGR03723">
    <property type="entry name" value="T6A_TsaD_YgjD"/>
    <property type="match status" value="1"/>
</dbReference>
<dbReference type="PANTHER" id="PTHR11735">
    <property type="entry name" value="TRNA N6-ADENOSINE THREONYLCARBAMOYLTRANSFERASE"/>
    <property type="match status" value="1"/>
</dbReference>
<dbReference type="PANTHER" id="PTHR11735:SF6">
    <property type="entry name" value="TRNA N6-ADENOSINE THREONYLCARBAMOYLTRANSFERASE, MITOCHONDRIAL"/>
    <property type="match status" value="1"/>
</dbReference>
<dbReference type="Pfam" id="PF00814">
    <property type="entry name" value="TsaD"/>
    <property type="match status" value="1"/>
</dbReference>
<dbReference type="PRINTS" id="PR00789">
    <property type="entry name" value="OSIALOPTASE"/>
</dbReference>
<dbReference type="SUPFAM" id="SSF53067">
    <property type="entry name" value="Actin-like ATPase domain"/>
    <property type="match status" value="2"/>
</dbReference>
<dbReference type="PROSITE" id="PS01016">
    <property type="entry name" value="GLYCOPROTEASE"/>
    <property type="match status" value="1"/>
</dbReference>
<feature type="chain" id="PRO_1000215312" description="tRNA N6-adenosine threonylcarbamoyltransferase">
    <location>
        <begin position="1"/>
        <end position="352"/>
    </location>
</feature>
<feature type="binding site" evidence="1">
    <location>
        <position position="115"/>
    </location>
    <ligand>
        <name>Fe cation</name>
        <dbReference type="ChEBI" id="CHEBI:24875"/>
    </ligand>
</feature>
<feature type="binding site" evidence="1">
    <location>
        <position position="119"/>
    </location>
    <ligand>
        <name>Fe cation</name>
        <dbReference type="ChEBI" id="CHEBI:24875"/>
    </ligand>
</feature>
<feature type="binding site" evidence="1">
    <location>
        <begin position="138"/>
        <end position="142"/>
    </location>
    <ligand>
        <name>substrate</name>
    </ligand>
</feature>
<feature type="binding site" evidence="1">
    <location>
        <position position="171"/>
    </location>
    <ligand>
        <name>substrate</name>
    </ligand>
</feature>
<feature type="binding site" evidence="1">
    <location>
        <position position="184"/>
    </location>
    <ligand>
        <name>substrate</name>
    </ligand>
</feature>
<feature type="binding site" evidence="1">
    <location>
        <position position="277"/>
    </location>
    <ligand>
        <name>substrate</name>
    </ligand>
</feature>
<feature type="binding site" evidence="1">
    <location>
        <position position="305"/>
    </location>
    <ligand>
        <name>Fe cation</name>
        <dbReference type="ChEBI" id="CHEBI:24875"/>
    </ligand>
</feature>
<sequence>MLLLGIESSCDETGVALVETHGSALPQLRSHALHSQIAMHQAYGGVVPELASRDHIRRVLPLTEAVMAEAGRSLAEIDVVAYTRGPGLAGALLVGAGVACALGAALGKPVLGVHHLEGHLLSPFLSADPPEFPFVALLVSGGHTQLMRVDGVGRYELLGETIDDAAGEAFDKSAKLMGLPYPGGPWLAKLAEAGNPAAFKLPRPLLHSGDLDFSFAGLKTAVLTQAKKLGAELEANKADLAASTQAAIVEVLLKKSLAALGQTGLKRLVVAGGVGANRSLREQLNAACAKRGVRVHYPELHLCTDNGAMIAMAAAMRLQSGLAEASERYAFDVKPRWPMASLMASSAAPVAA</sequence>
<organism>
    <name type="scientific">Variovorax paradoxus (strain S110)</name>
    <dbReference type="NCBI Taxonomy" id="543728"/>
    <lineage>
        <taxon>Bacteria</taxon>
        <taxon>Pseudomonadati</taxon>
        <taxon>Pseudomonadota</taxon>
        <taxon>Betaproteobacteria</taxon>
        <taxon>Burkholderiales</taxon>
        <taxon>Comamonadaceae</taxon>
        <taxon>Variovorax</taxon>
    </lineage>
</organism>
<gene>
    <name evidence="1" type="primary">tsaD</name>
    <name type="synonym">gcp</name>
    <name type="ordered locus">Vapar_3520</name>
</gene>
<accession>C5CT30</accession>
<evidence type="ECO:0000255" key="1">
    <source>
        <dbReference type="HAMAP-Rule" id="MF_01445"/>
    </source>
</evidence>